<dbReference type="EC" id="2.3.1.-" evidence="2"/>
<dbReference type="EMBL" id="AP000370">
    <property type="protein sequence ID" value="BAA97061.1"/>
    <property type="status" value="ALT_SEQ"/>
    <property type="molecule type" value="Genomic_DNA"/>
</dbReference>
<dbReference type="EMBL" id="CP002686">
    <property type="protein sequence ID" value="AEE75596.1"/>
    <property type="molecule type" value="Genomic_DNA"/>
</dbReference>
<dbReference type="EMBL" id="CP002686">
    <property type="protein sequence ID" value="ANM64196.1"/>
    <property type="molecule type" value="Genomic_DNA"/>
</dbReference>
<dbReference type="EMBL" id="CP002686">
    <property type="protein sequence ID" value="ANM64199.1"/>
    <property type="molecule type" value="Genomic_DNA"/>
</dbReference>
<dbReference type="RefSeq" id="NP_001326242.1">
    <property type="nucleotide sequence ID" value="NM_001338147.1"/>
</dbReference>
<dbReference type="RefSeq" id="NP_001326245.1">
    <property type="nucleotide sequence ID" value="NM_001338143.1"/>
</dbReference>
<dbReference type="RefSeq" id="NP_188116.1">
    <property type="nucleotide sequence ID" value="NM_112360.3"/>
</dbReference>
<dbReference type="SMR" id="F4IXE7"/>
<dbReference type="DIP" id="DIP-60052N"/>
<dbReference type="FunCoup" id="F4IXE7">
    <property type="interactions" value="1340"/>
</dbReference>
<dbReference type="STRING" id="3702.F4IXE7"/>
<dbReference type="iPTMnet" id="F4IXE7"/>
<dbReference type="PaxDb" id="3702-AT3G14980.1"/>
<dbReference type="EnsemblPlants" id="AT3G14980.1">
    <property type="protein sequence ID" value="AT3G14980.1"/>
    <property type="gene ID" value="AT3G14980"/>
</dbReference>
<dbReference type="EnsemblPlants" id="AT3G14980.2">
    <property type="protein sequence ID" value="AT3G14980.2"/>
    <property type="gene ID" value="AT3G14980"/>
</dbReference>
<dbReference type="EnsemblPlants" id="AT3G14980.6">
    <property type="protein sequence ID" value="AT3G14980.6"/>
    <property type="gene ID" value="AT3G14980"/>
</dbReference>
<dbReference type="GeneID" id="820727"/>
<dbReference type="Gramene" id="AT3G14980.1">
    <property type="protein sequence ID" value="AT3G14980.1"/>
    <property type="gene ID" value="AT3G14980"/>
</dbReference>
<dbReference type="Gramene" id="AT3G14980.2">
    <property type="protein sequence ID" value="AT3G14980.2"/>
    <property type="gene ID" value="AT3G14980"/>
</dbReference>
<dbReference type="Gramene" id="AT3G14980.6">
    <property type="protein sequence ID" value="AT3G14980.6"/>
    <property type="gene ID" value="AT3G14980"/>
</dbReference>
<dbReference type="KEGG" id="ath:AT3G14980"/>
<dbReference type="Araport" id="AT3G14980"/>
<dbReference type="TAIR" id="AT3G14980">
    <property type="gene designation" value="ROS4"/>
</dbReference>
<dbReference type="eggNOG" id="ENOG502QTVY">
    <property type="taxonomic scope" value="Eukaryota"/>
</dbReference>
<dbReference type="HOGENOM" id="CLU_004098_0_0_1"/>
<dbReference type="InParanoid" id="F4IXE7"/>
<dbReference type="OrthoDB" id="429143at2759"/>
<dbReference type="BRENDA" id="2.3.1.48">
    <property type="organism ID" value="399"/>
</dbReference>
<dbReference type="PRO" id="PR:F4IXE7"/>
<dbReference type="Proteomes" id="UP000006548">
    <property type="component" value="Chromosome 3"/>
</dbReference>
<dbReference type="ExpressionAtlas" id="F4IXE7">
    <property type="expression patterns" value="baseline and differential"/>
</dbReference>
<dbReference type="GO" id="GO:0005634">
    <property type="term" value="C:nucleus"/>
    <property type="evidence" value="ECO:0000314"/>
    <property type="project" value="TAIR"/>
</dbReference>
<dbReference type="GO" id="GO:0009506">
    <property type="term" value="C:plasmodesma"/>
    <property type="evidence" value="ECO:0007005"/>
    <property type="project" value="TAIR"/>
</dbReference>
<dbReference type="GO" id="GO:0010385">
    <property type="term" value="F:double-stranded methylated DNA binding"/>
    <property type="evidence" value="ECO:0000353"/>
    <property type="project" value="TAIR"/>
</dbReference>
<dbReference type="GO" id="GO:0004402">
    <property type="term" value="F:histone acetyltransferase activity"/>
    <property type="evidence" value="ECO:0000314"/>
    <property type="project" value="TAIR"/>
</dbReference>
<dbReference type="GO" id="GO:0042393">
    <property type="term" value="F:histone binding"/>
    <property type="evidence" value="ECO:0000314"/>
    <property type="project" value="TAIR"/>
</dbReference>
<dbReference type="GO" id="GO:0008270">
    <property type="term" value="F:zinc ion binding"/>
    <property type="evidence" value="ECO:0007669"/>
    <property type="project" value="UniProtKB-KW"/>
</dbReference>
<dbReference type="GO" id="GO:0080188">
    <property type="term" value="P:gene silencing by siRNA-directed DNA methylation"/>
    <property type="evidence" value="ECO:0000315"/>
    <property type="project" value="TAIR"/>
</dbReference>
<dbReference type="CDD" id="cd15539">
    <property type="entry name" value="PHD1_AIRE"/>
    <property type="match status" value="1"/>
</dbReference>
<dbReference type="FunFam" id="3.30.40.10:FF:000465">
    <property type="entry name" value="Increased DNA methylation 1"/>
    <property type="match status" value="1"/>
</dbReference>
<dbReference type="Gene3D" id="3.40.630.30">
    <property type="match status" value="1"/>
</dbReference>
<dbReference type="Gene3D" id="3.30.40.10">
    <property type="entry name" value="Zinc/RING finger domain, C3HC4 (zinc finger)"/>
    <property type="match status" value="1"/>
</dbReference>
<dbReference type="InterPro" id="IPR016181">
    <property type="entry name" value="Acyl_CoA_acyltransferase"/>
</dbReference>
<dbReference type="InterPro" id="IPR000182">
    <property type="entry name" value="GNAT_dom"/>
</dbReference>
<dbReference type="InterPro" id="IPR056511">
    <property type="entry name" value="IDM1_C"/>
</dbReference>
<dbReference type="InterPro" id="IPR032308">
    <property type="entry name" value="TDBD"/>
</dbReference>
<dbReference type="InterPro" id="IPR011011">
    <property type="entry name" value="Znf_FYVE_PHD"/>
</dbReference>
<dbReference type="InterPro" id="IPR001965">
    <property type="entry name" value="Znf_PHD"/>
</dbReference>
<dbReference type="InterPro" id="IPR019787">
    <property type="entry name" value="Znf_PHD-finger"/>
</dbReference>
<dbReference type="InterPro" id="IPR013083">
    <property type="entry name" value="Znf_RING/FYVE/PHD"/>
</dbReference>
<dbReference type="PANTHER" id="PTHR46508:SF2">
    <property type="entry name" value="INCREASED DNA METHYLATION 1"/>
    <property type="match status" value="1"/>
</dbReference>
<dbReference type="PANTHER" id="PTHR46508">
    <property type="entry name" value="PHD FINGER FAMILY PROTEIN"/>
    <property type="match status" value="1"/>
</dbReference>
<dbReference type="Pfam" id="PF23209">
    <property type="entry name" value="IDM1_C"/>
    <property type="match status" value="1"/>
</dbReference>
<dbReference type="Pfam" id="PF00628">
    <property type="entry name" value="PHD"/>
    <property type="match status" value="1"/>
</dbReference>
<dbReference type="Pfam" id="PF16135">
    <property type="entry name" value="TDBD"/>
    <property type="match status" value="1"/>
</dbReference>
<dbReference type="SMART" id="SM00249">
    <property type="entry name" value="PHD"/>
    <property type="match status" value="2"/>
</dbReference>
<dbReference type="SUPFAM" id="SSF55729">
    <property type="entry name" value="Acyl-CoA N-acyltransferases (Nat)"/>
    <property type="match status" value="1"/>
</dbReference>
<dbReference type="SUPFAM" id="SSF57903">
    <property type="entry name" value="FYVE/PHD zinc finger"/>
    <property type="match status" value="1"/>
</dbReference>
<dbReference type="PROSITE" id="PS51186">
    <property type="entry name" value="GNAT"/>
    <property type="match status" value="1"/>
</dbReference>
<dbReference type="PROSITE" id="PS01359">
    <property type="entry name" value="ZF_PHD_1"/>
    <property type="match status" value="1"/>
</dbReference>
<dbReference type="PROSITE" id="PS50016">
    <property type="entry name" value="ZF_PHD_2"/>
    <property type="match status" value="1"/>
</dbReference>
<name>IDM1_ARATH</name>
<keyword id="KW-0012">Acyltransferase</keyword>
<keyword id="KW-0479">Metal-binding</keyword>
<keyword id="KW-0539">Nucleus</keyword>
<keyword id="KW-1185">Reference proteome</keyword>
<keyword id="KW-0677">Repeat</keyword>
<keyword id="KW-0804">Transcription</keyword>
<keyword id="KW-0805">Transcription regulation</keyword>
<keyword id="KW-0808">Transferase</keyword>
<keyword id="KW-0862">Zinc</keyword>
<keyword id="KW-0863">Zinc-finger</keyword>
<sequence length="1189" mass="131329">MLPGAEIEMLGGDCFEGSYEDHQIFREVFFGSDPGNTTKRCLVTGAINFECDSSKNVNSSLSSNSVVTSGYACPQGFEASASRDGSDFNTKAKRVKLSGNKHLDARDEKGSALHGFPTSDIARETIPLHLVESSNKGVSTSSYLLKHSIVKGREVYLGGIVSGKCKSLNLDKCDGKEFKAIASPVSQESFATRMISVGASTPHSEKACFPLQLNNGSKVSPNELIMSKTCLKIDPKEDPRPLLYKYVCKVLTAARWKIEKRERSAGRKHVDTFYISPEGRKFREFGSAWKALGGILLADRKLMDTGTKKWTGINDFWSDLSLTLLDIEENMKNLNLANTRALWWSALEPFVVVVFISKQVGSLRKGNKVEVARNSNPDKLKKEDTICLNLISGCPESVLTVSEGSHLVHDVDANQEIHSDLEVQTKISSQKVSSRLERQSIIGKEISGTHEQEASKGIVASKLIAEDMHESVMRKNLHRRSKKISDIKPASLDQHDSLDSNSLNSFEFQDKEMGNIHLVSKGSRDERLRNEKMNNSCCNSKKGRKKARKHYTQDDDLMGSTITRNKGKFSRSSQKKKTQKPKARTKKRNNRGGCRLLPRSSSNVENHFFQGNWSILGPRTVLSWLIATKVISRDEVIQLRDPDDDTVVKTGLVTKDGVVCTCCNKTVSLSEFKNHAGFNQNCPCLNLFMGSGKPFASCQLEAWSAEYKARRNGWRLEKASDDDPNDDSCGVCGDGGELICCDNCPSTFHQACLSMQVLPEGSWYCSSCTCWICSELVSDNAERSQDFKCSQCAHKYHGTCLQGISKRRKLFPETYFCGKNCEKVYNGLSSRVGIINPNADGLSWSILKCFQEDGMVHSARRLALKAECNSKLAVALSIMEESFLSMVDPRTGIDMIPHVLYNWGSTFARLDFDGFYTVVVEKDDVMISVASIRVHGVTIAEMPLVATCSKYRRQGMCRILVAAIEEMLMSLKVEKLVVAALPSLVETWTEGFGFKPMDDEERDALKRINLMVFPGTTLLKKTLYESTKPSTMKGVCLSKERNNPSNKEADLEPGLDKAGSPMSTQVESCDQMVPAGSDDEPSPGFPVPLGADQTEPTSETENPSRDSNANDRPNKTTVVSIGEEEEEECLQKDVSKLSEEGKETTRASSSSAALEEVSGLGLGVVNNVSDEMLLCVDEQLDSDSSQDSE</sequence>
<proteinExistence type="evidence at protein level"/>
<gene>
    <name evidence="9" type="primary">IDM1</name>
    <name evidence="10" type="synonym">ROS4</name>
    <name evidence="12" type="ordered locus">At3g14980</name>
    <name evidence="13" type="ORF">K15M2.12</name>
</gene>
<comment type="function">
    <text evidence="4 5 7">Histone H3 acetyltransferase that binds methylated DNA at chromatin sites lacking histone H3K4 di- or trimethylation and catalyzes H3K18 and H3K23 acetylation (PubMed:22700931, PubMed:22733760). Prevents the transcriptional silencing of transgenes and of some endogenous genes (PubMed:22700931, PubMed:22733760). Requires the presence of IDM2 for efficient H3K18 acetylation, but not for H3K23 acetylation (PubMed:25002145).</text>
</comment>
<comment type="subunit">
    <text evidence="6 7 8">Interacts (via N-terminus) with IDM2 (PubMed:24920332, PubMed:25002145, PubMed:25684209). Interacts with IMD3 (PubMed:25684209). Part of a complex made of MBD7, IDM1, IDM2 and IDM3 (PubMed:25684209).</text>
</comment>
<comment type="subcellular location">
    <subcellularLocation>
        <location evidence="4 5 6 7">Nucleus</location>
    </subcellularLocation>
    <text evidence="6 7">Colocalizes with IDM2 within nucleoplasmic and nucleolar foci.</text>
</comment>
<comment type="tissue specificity">
    <text evidence="5">Expressed in cotyledons and hypocotyls in young seedlings.</text>
</comment>
<comment type="domain">
    <text evidence="4 6">The PHD finger domain specifically binds the N-terminal tail of histone H3 and this binding is inhibited by H3K4 di- or trimethylation (PubMed:22700931). No effect of H3K9 methylation on the binding (PubMed:22700931). The N-terminal domain (1-592) is required for interactions with IDM2 (PubMed:24920332).</text>
</comment>
<comment type="disruption phenotype">
    <text evidence="4">DNA hypermethylation.</text>
</comment>
<comment type="sequence caution" evidence="11">
    <conflict type="erroneous gene model prediction">
        <sequence resource="EMBL-CDS" id="BAA97061"/>
    </conflict>
</comment>
<reference key="1">
    <citation type="journal article" date="2000" name="DNA Res.">
        <title>Structural analysis of Arabidopsis thaliana chromosome 3. II. Sequence features of the 4,251,695 bp regions covered by 90 P1, TAC and BAC clones.</title>
        <authorList>
            <person name="Kaneko T."/>
            <person name="Katoh T."/>
            <person name="Sato S."/>
            <person name="Nakamura Y."/>
            <person name="Asamizu E."/>
            <person name="Tabata S."/>
        </authorList>
    </citation>
    <scope>NUCLEOTIDE SEQUENCE [LARGE SCALE GENOMIC DNA]</scope>
    <source>
        <strain>cv. Columbia</strain>
    </source>
</reference>
<reference key="2">
    <citation type="journal article" date="2017" name="Plant J.">
        <title>Araport11: a complete reannotation of the Arabidopsis thaliana reference genome.</title>
        <authorList>
            <person name="Cheng C.Y."/>
            <person name="Krishnakumar V."/>
            <person name="Chan A.P."/>
            <person name="Thibaud-Nissen F."/>
            <person name="Schobel S."/>
            <person name="Town C.D."/>
        </authorList>
    </citation>
    <scope>GENOME REANNOTATION</scope>
    <source>
        <strain>cv. Columbia</strain>
    </source>
</reference>
<reference key="3">
    <citation type="journal article" date="2012" name="Proc. Natl. Acad. Sci. U.S.A.">
        <title>Antisilencing role of the RNA-directed DNA methylation pathway and a histone acetyltransferase in Arabidopsis.</title>
        <authorList>
            <person name="Li X."/>
            <person name="Qian W."/>
            <person name="Zhao Y."/>
            <person name="Wang C."/>
            <person name="Shen J."/>
            <person name="Zhu J.K."/>
            <person name="Gong Z."/>
        </authorList>
    </citation>
    <scope>FUNCTION</scope>
    <scope>SUBCELLULAR LOCATION</scope>
    <scope>TISSUE SPECIFICITY</scope>
</reference>
<reference key="4">
    <citation type="journal article" date="2012" name="Science">
        <title>A histone acetyltransferase regulates active DNA demethylation in Arabidopsis.</title>
        <authorList>
            <person name="Qian W."/>
            <person name="Miki D."/>
            <person name="Zhang H."/>
            <person name="Liu Y."/>
            <person name="Zhang X."/>
            <person name="Tang K."/>
            <person name="Kan Y."/>
            <person name="La H."/>
            <person name="Li X."/>
            <person name="Li S."/>
            <person name="Zhu X."/>
            <person name="Shi X."/>
            <person name="Zhang K."/>
            <person name="Pontes O."/>
            <person name="Chen X."/>
            <person name="Liu R."/>
            <person name="Gong Z."/>
            <person name="Zhu J.K."/>
        </authorList>
    </citation>
    <scope>FUNCTION</scope>
    <scope>DISRUPTION PHENOTYPE</scope>
    <scope>DOMAIN</scope>
    <scope>MUTAGENESIS OF CYS-732; CYS-740; ASP-924; GLU-941 AND MET-942</scope>
    <scope>SUBCELLULAR LOCATION</scope>
</reference>
<reference key="5">
    <citation type="journal article" date="2014" name="Mol. Cell">
        <title>Regulation of active DNA demethylation by an alpha-crystallin domain protein in Arabidopsis.</title>
        <authorList>
            <person name="Qian W."/>
            <person name="Miki D."/>
            <person name="Lei M."/>
            <person name="Zhu X."/>
            <person name="Zhang H."/>
            <person name="Liu Y."/>
            <person name="Li Y."/>
            <person name="Lang Z."/>
            <person name="Wang J."/>
            <person name="Tang K."/>
            <person name="Liu R."/>
            <person name="Zhu J.K."/>
        </authorList>
    </citation>
    <scope>FUNCTION</scope>
    <scope>INTERACTION WITH IDM2</scope>
    <scope>SUBCELLULAR LOCATION</scope>
</reference>
<reference key="6">
    <citation type="journal article" date="2014" name="Plant Cell">
        <title>REPRESSOR OF SILENCING5 encodes a member of the small heat shock protein family and is required for DNA demethylation in Arabidopsis.</title>
        <authorList>
            <person name="Zhao Y."/>
            <person name="Xie S."/>
            <person name="Li X."/>
            <person name="Wang C."/>
            <person name="Chen Z."/>
            <person name="Lai J."/>
            <person name="Gong Z."/>
        </authorList>
    </citation>
    <scope>INTERACTION WITH IDM2</scope>
    <scope>DOMAIN</scope>
    <scope>SUBCELLULAR LOCATION</scope>
</reference>
<reference key="7">
    <citation type="journal article" date="2015" name="Mol. Cell">
        <title>The methyl-CpG-binding protein MBD7 facilitates active DNA demethylation to limit DNA hyper-methylation and transcriptional gene silencing.</title>
        <authorList>
            <person name="Lang Z."/>
            <person name="Lei M."/>
            <person name="Wang X."/>
            <person name="Tang K."/>
            <person name="Miki D."/>
            <person name="Zhang H."/>
            <person name="Mangrauthia S.K."/>
            <person name="Liu W."/>
            <person name="Nie W."/>
            <person name="Ma G."/>
            <person name="Yan J."/>
            <person name="Duan C.G."/>
            <person name="Hsu C.C."/>
            <person name="Wang C."/>
            <person name="Tao W.A."/>
            <person name="Gong Z."/>
            <person name="Zhu J.K."/>
        </authorList>
    </citation>
    <scope>INTERACTION WITH IDM2 AND IDM3</scope>
</reference>
<accession>F4IXE7</accession>
<accession>Q9LKA7</accession>
<organism evidence="14">
    <name type="scientific">Arabidopsis thaliana</name>
    <name type="common">Mouse-ear cress</name>
    <dbReference type="NCBI Taxonomy" id="3702"/>
    <lineage>
        <taxon>Eukaryota</taxon>
        <taxon>Viridiplantae</taxon>
        <taxon>Streptophyta</taxon>
        <taxon>Embryophyta</taxon>
        <taxon>Tracheophyta</taxon>
        <taxon>Spermatophyta</taxon>
        <taxon>Magnoliopsida</taxon>
        <taxon>eudicotyledons</taxon>
        <taxon>Gunneridae</taxon>
        <taxon>Pentapetalae</taxon>
        <taxon>rosids</taxon>
        <taxon>malvids</taxon>
        <taxon>Brassicales</taxon>
        <taxon>Brassicaceae</taxon>
        <taxon>Camelineae</taxon>
        <taxon>Arabidopsis</taxon>
    </lineage>
</organism>
<protein>
    <recommendedName>
        <fullName evidence="9">Increased DNA methylation 1</fullName>
    </recommendedName>
    <alternativeName>
        <fullName evidence="11">Histone H3 acetyltransferase IDM1</fullName>
        <ecNumber evidence="2">2.3.1.-</ecNumber>
    </alternativeName>
    <alternativeName>
        <fullName evidence="10">Protein ROS4</fullName>
    </alternativeName>
    <alternativeName>
        <fullName evidence="10">Repressor of silencing 4</fullName>
    </alternativeName>
</protein>
<evidence type="ECO:0000255" key="1">
    <source>
        <dbReference type="PROSITE-ProRule" id="PRU00146"/>
    </source>
</evidence>
<evidence type="ECO:0000255" key="2">
    <source>
        <dbReference type="PROSITE-ProRule" id="PRU00532"/>
    </source>
</evidence>
<evidence type="ECO:0000256" key="3">
    <source>
        <dbReference type="SAM" id="MobiDB-lite"/>
    </source>
</evidence>
<evidence type="ECO:0000269" key="4">
    <source>
    </source>
</evidence>
<evidence type="ECO:0000269" key="5">
    <source>
    </source>
</evidence>
<evidence type="ECO:0000269" key="6">
    <source>
    </source>
</evidence>
<evidence type="ECO:0000269" key="7">
    <source>
    </source>
</evidence>
<evidence type="ECO:0000269" key="8">
    <source>
    </source>
</evidence>
<evidence type="ECO:0000303" key="9">
    <source>
    </source>
</evidence>
<evidence type="ECO:0000303" key="10">
    <source>
    </source>
</evidence>
<evidence type="ECO:0000305" key="11"/>
<evidence type="ECO:0000312" key="12">
    <source>
        <dbReference type="Araport" id="AT3G14980"/>
    </source>
</evidence>
<evidence type="ECO:0000312" key="13">
    <source>
        <dbReference type="EMBL" id="BAA97061.1"/>
    </source>
</evidence>
<evidence type="ECO:0000312" key="14">
    <source>
        <dbReference type="Proteomes" id="UP000006548"/>
    </source>
</evidence>
<feature type="chain" id="PRO_0000432653" description="Increased DNA methylation 1">
    <location>
        <begin position="1"/>
        <end position="1189"/>
    </location>
</feature>
<feature type="domain" description="N-acetyltransferase" evidence="2">
    <location>
        <begin position="879"/>
        <end position="1024"/>
    </location>
</feature>
<feature type="zinc finger region" description="PHD-type 1" evidence="1">
    <location>
        <begin position="726"/>
        <end position="771"/>
    </location>
</feature>
<feature type="zinc finger region" description="PHD-type 2; degenerate" evidence="1">
    <location>
        <begin position="767"/>
        <end position="823"/>
    </location>
</feature>
<feature type="region of interest" description="Disordered" evidence="3">
    <location>
        <begin position="475"/>
        <end position="498"/>
    </location>
</feature>
<feature type="region of interest" description="Disordered" evidence="3">
    <location>
        <begin position="523"/>
        <end position="597"/>
    </location>
</feature>
<feature type="region of interest" description="Disordered" evidence="3">
    <location>
        <begin position="1031"/>
        <end position="1157"/>
    </location>
</feature>
<feature type="compositionally biased region" description="Basic and acidic residues" evidence="3">
    <location>
        <begin position="523"/>
        <end position="532"/>
    </location>
</feature>
<feature type="compositionally biased region" description="Basic residues" evidence="3">
    <location>
        <begin position="541"/>
        <end position="550"/>
    </location>
</feature>
<feature type="compositionally biased region" description="Basic residues" evidence="3">
    <location>
        <begin position="565"/>
        <end position="590"/>
    </location>
</feature>
<feature type="compositionally biased region" description="Basic and acidic residues" evidence="3">
    <location>
        <begin position="1038"/>
        <end position="1050"/>
    </location>
</feature>
<feature type="compositionally biased region" description="Basic and acidic residues" evidence="3">
    <location>
        <begin position="1102"/>
        <end position="1114"/>
    </location>
</feature>
<feature type="compositionally biased region" description="Basic and acidic residues" evidence="3">
    <location>
        <begin position="1129"/>
        <end position="1145"/>
    </location>
</feature>
<feature type="compositionally biased region" description="Low complexity" evidence="3">
    <location>
        <begin position="1147"/>
        <end position="1157"/>
    </location>
</feature>
<feature type="mutagenesis site" description="Loss of binding to histone H3 and loss of acetyltransferase activity." evidence="4">
    <original>C</original>
    <variation>W</variation>
    <location>
        <position position="732"/>
    </location>
</feature>
<feature type="mutagenesis site" description="Loss of binding to histone H3, but no effect on acetyltransferase activity." evidence="4">
    <original>C</original>
    <variation>W</variation>
    <location>
        <position position="740"/>
    </location>
</feature>
<feature type="mutagenesis site" description="Strongly decreased acetyltransferase activity." evidence="4">
    <original>D</original>
    <variation>A</variation>
    <location>
        <position position="924"/>
    </location>
</feature>
<feature type="mutagenesis site" description="Loss of acetyltransferase activity." evidence="4">
    <original>E</original>
    <variation>Q</variation>
    <location>
        <position position="941"/>
    </location>
</feature>
<feature type="mutagenesis site" description="Decreased acetyltransferase activity." evidence="4">
    <original>M</original>
    <variation>A</variation>
    <location>
        <position position="942"/>
    </location>
</feature>